<sequence>MAAPAFPPFRLRFATAATLLGMLGLAGCQTGGYQDSVPPTSGVQPLKGLAQNVSVRRNAMGAPLIESSSFHDALFSLGYVHAGDRIEQMVAMRLLAQGRLAELAGSEALDIDRLMRAANLKQSAAQQYADASPRLKRFFEVYARGVNAYLFRYRDKLPAGLASSGYRPEYWKPEDSALIFCLYAFSQSVNLQEELSALTLAQKAGSDKLAWLLPGAPDEPLAEMEVDKLKGLNLASQLPGLPALAAASQKLADLDLLGSPGSANLALGPQRSRSGKSLLASDSRAAWALSPVQINTSKYQVAGLSLPGLPIVLAGYNGKLAWSSSAVMADNQDLFLEQLRRQGSQLSYLADGKWLPARARSETYFVRGQRPVREVMYDTRHGTLLAQPENASLGLALNLPQFKGDRSLDALFDLTRAKNVERAFDSTREVTAAAVNFVFAEPEHIGWQVSGRYPNRREGQGLLPSPGWDGRYDWDGYADPMLHPYDQDPPAGWIGHANQRSLPRGYGMQLSSTWYYPERAERLAQLAGNGRHDSRSLMALQNDQVTLLANKLKQMFDAPGMAQPLKQAIDALPAGQRDKARDTLARLKAFDGRLSPVSADAALYELFLQEVARQTFLDDLGPESGPAWQAFVGNARLSFSAQADHLLGRDDSPFWDDRNTPQKEDKPAILARSLAGAMEAGIAQLGADRRTWQWGKLHQYRWPAPAYHGLGDAISRSPLAAGGDFTTLALTPFAWGSDFDTHLPASARMIVDFGQAEPLQILTSSGQSGNPASAHYRDGLDAWFKGRFMSLPLQQQNFGRAYGNQRLTLVPGR</sequence>
<evidence type="ECO:0000250" key="1"/>
<evidence type="ECO:0000255" key="2"/>
<evidence type="ECO:0000305" key="3"/>
<keyword id="KW-0378">Hydrolase</keyword>
<keyword id="KW-0574">Periplasm</keyword>
<keyword id="KW-0673">Quorum sensing</keyword>
<keyword id="KW-1185">Reference proteome</keyword>
<keyword id="KW-0732">Signal</keyword>
<keyword id="KW-0865">Zymogen</keyword>
<name>QUIP_PSEPK</name>
<organism>
    <name type="scientific">Pseudomonas putida (strain ATCC 47054 / DSM 6125 / CFBP 8728 / NCIMB 11950 / KT2440)</name>
    <dbReference type="NCBI Taxonomy" id="160488"/>
    <lineage>
        <taxon>Bacteria</taxon>
        <taxon>Pseudomonadati</taxon>
        <taxon>Pseudomonadota</taxon>
        <taxon>Gammaproteobacteria</taxon>
        <taxon>Pseudomonadales</taxon>
        <taxon>Pseudomonadaceae</taxon>
        <taxon>Pseudomonas</taxon>
    </lineage>
</organism>
<gene>
    <name type="primary">quiP</name>
    <name type="ordered locus">PP_1108</name>
</gene>
<protein>
    <recommendedName>
        <fullName>Acyl-homoserine lactone acylase QuiP</fullName>
        <shortName>AHL acylase QuiP</shortName>
        <shortName>Acyl-HSL acylase QuiP</shortName>
        <ecNumber>3.5.1.97</ecNumber>
    </recommendedName>
    <component>
        <recommendedName>
            <fullName>Acyl-homoserine lactone acylase QuiP subunit alpha</fullName>
            <shortName>Acyl-HSL acylase QuiP subunit alpha</shortName>
        </recommendedName>
    </component>
    <component>
        <recommendedName>
            <fullName>Acyl-homoserine lactone acylase QuiP subunit beta</fullName>
            <shortName>Acyl-HSL acylase QuiP subunit beta</shortName>
        </recommendedName>
    </component>
</protein>
<comment type="function">
    <text evidence="1">Catalyzes the deacylation of acyl-homoserine lactone (AHL or acyl-HSL), releasing homoserine lactone (HSL) and the corresponding fatty acid. Possesses a specificity for the degradation of long-chain acyl-HSLs (side chains of seven or more carbons in length) (By similarity).</text>
</comment>
<comment type="catalytic activity">
    <reaction>
        <text>an N-acyl-L-homoserine lactone + H2O = L-homoserine lactone + a carboxylate</text>
        <dbReference type="Rhea" id="RHEA:18937"/>
        <dbReference type="ChEBI" id="CHEBI:15377"/>
        <dbReference type="ChEBI" id="CHEBI:29067"/>
        <dbReference type="ChEBI" id="CHEBI:55474"/>
        <dbReference type="ChEBI" id="CHEBI:58633"/>
        <dbReference type="EC" id="3.5.1.97"/>
    </reaction>
</comment>
<comment type="subunit">
    <text evidence="1">Heterodimer of an alpha subunit and a beta subunit processed from the same precursor.</text>
</comment>
<comment type="subcellular location">
    <subcellularLocation>
        <location evidence="3">Periplasm</location>
    </subcellularLocation>
</comment>
<comment type="miscellaneous">
    <text>AHL-mediated signaling mediates quorum sensing in many species of Proteobacteria, regulating hundreds of genes, including many that code for extracellular virulence factors.</text>
</comment>
<comment type="similarity">
    <text evidence="3">Belongs to the peptidase S45 family.</text>
</comment>
<accession>Q88NU6</accession>
<reference key="1">
    <citation type="journal article" date="2002" name="Environ. Microbiol.">
        <title>Complete genome sequence and comparative analysis of the metabolically versatile Pseudomonas putida KT2440.</title>
        <authorList>
            <person name="Nelson K.E."/>
            <person name="Weinel C."/>
            <person name="Paulsen I.T."/>
            <person name="Dodson R.J."/>
            <person name="Hilbert H."/>
            <person name="Martins dos Santos V.A.P."/>
            <person name="Fouts D.E."/>
            <person name="Gill S.R."/>
            <person name="Pop M."/>
            <person name="Holmes M."/>
            <person name="Brinkac L.M."/>
            <person name="Beanan M.J."/>
            <person name="DeBoy R.T."/>
            <person name="Daugherty S.C."/>
            <person name="Kolonay J.F."/>
            <person name="Madupu R."/>
            <person name="Nelson W.C."/>
            <person name="White O."/>
            <person name="Peterson J.D."/>
            <person name="Khouri H.M."/>
            <person name="Hance I."/>
            <person name="Chris Lee P."/>
            <person name="Holtzapple E.K."/>
            <person name="Scanlan D."/>
            <person name="Tran K."/>
            <person name="Moazzez A."/>
            <person name="Utterback T.R."/>
            <person name="Rizzo M."/>
            <person name="Lee K."/>
            <person name="Kosack D."/>
            <person name="Moestl D."/>
            <person name="Wedler H."/>
            <person name="Lauber J."/>
            <person name="Stjepandic D."/>
            <person name="Hoheisel J."/>
            <person name="Straetz M."/>
            <person name="Heim S."/>
            <person name="Kiewitz C."/>
            <person name="Eisen J.A."/>
            <person name="Timmis K.N."/>
            <person name="Duesterhoeft A."/>
            <person name="Tuemmler B."/>
            <person name="Fraser C.M."/>
        </authorList>
    </citation>
    <scope>NUCLEOTIDE SEQUENCE [LARGE SCALE GENOMIC DNA]</scope>
    <source>
        <strain>ATCC 47054 / DSM 6125 / CFBP 8728 / NCIMB 11950 / KT2440</strain>
    </source>
</reference>
<dbReference type="EC" id="3.5.1.97"/>
<dbReference type="EMBL" id="AE015451">
    <property type="protein sequence ID" value="AAN66733.1"/>
    <property type="molecule type" value="Genomic_DNA"/>
</dbReference>
<dbReference type="RefSeq" id="NP_743269.1">
    <property type="nucleotide sequence ID" value="NC_002947.4"/>
</dbReference>
<dbReference type="RefSeq" id="WP_010952271.1">
    <property type="nucleotide sequence ID" value="NZ_CP169744.1"/>
</dbReference>
<dbReference type="SMR" id="Q88NU6"/>
<dbReference type="STRING" id="160488.PP_1108"/>
<dbReference type="MEROPS" id="S45.003"/>
<dbReference type="PaxDb" id="160488-PP_1108"/>
<dbReference type="KEGG" id="ppu:PP_1108"/>
<dbReference type="PATRIC" id="fig|160488.4.peg.1173"/>
<dbReference type="eggNOG" id="COG2366">
    <property type="taxonomic scope" value="Bacteria"/>
</dbReference>
<dbReference type="HOGENOM" id="CLU_011790_0_1_6"/>
<dbReference type="OrthoDB" id="9760084at2"/>
<dbReference type="PhylomeDB" id="Q88NU6"/>
<dbReference type="BioCyc" id="PPUT160488:G1G01-1181-MONOMER"/>
<dbReference type="Proteomes" id="UP000000556">
    <property type="component" value="Chromosome"/>
</dbReference>
<dbReference type="GO" id="GO:0042597">
    <property type="term" value="C:periplasmic space"/>
    <property type="evidence" value="ECO:0007669"/>
    <property type="project" value="UniProtKB-SubCell"/>
</dbReference>
<dbReference type="GO" id="GO:0016811">
    <property type="term" value="F:hydrolase activity, acting on carbon-nitrogen (but not peptide) bonds, in linear amides"/>
    <property type="evidence" value="ECO:0007669"/>
    <property type="project" value="InterPro"/>
</dbReference>
<dbReference type="GO" id="GO:0017000">
    <property type="term" value="P:antibiotic biosynthetic process"/>
    <property type="evidence" value="ECO:0007669"/>
    <property type="project" value="InterPro"/>
</dbReference>
<dbReference type="GO" id="GO:0009372">
    <property type="term" value="P:quorum sensing"/>
    <property type="evidence" value="ECO:0007669"/>
    <property type="project" value="UniProtKB-KW"/>
</dbReference>
<dbReference type="Gene3D" id="1.10.1400.10">
    <property type="match status" value="1"/>
</dbReference>
<dbReference type="Gene3D" id="2.30.120.10">
    <property type="match status" value="1"/>
</dbReference>
<dbReference type="Gene3D" id="3.60.20.10">
    <property type="entry name" value="Glutamine Phosphoribosylpyrophosphate, subunit 1, domain 1"/>
    <property type="match status" value="1"/>
</dbReference>
<dbReference type="Gene3D" id="1.10.439.10">
    <property type="entry name" value="Penicillin Amidohydrolase, domain 1"/>
    <property type="match status" value="1"/>
</dbReference>
<dbReference type="InterPro" id="IPR029055">
    <property type="entry name" value="Ntn_hydrolases_N"/>
</dbReference>
<dbReference type="InterPro" id="IPR014395">
    <property type="entry name" value="Pen/GL7ACA/AHL_acylase"/>
</dbReference>
<dbReference type="InterPro" id="IPR043147">
    <property type="entry name" value="Penicillin_amidase_A-knob"/>
</dbReference>
<dbReference type="InterPro" id="IPR023343">
    <property type="entry name" value="Penicillin_amidase_dom1"/>
</dbReference>
<dbReference type="InterPro" id="IPR043146">
    <property type="entry name" value="Penicillin_amidase_N_B-knob"/>
</dbReference>
<dbReference type="InterPro" id="IPR002692">
    <property type="entry name" value="S45"/>
</dbReference>
<dbReference type="PANTHER" id="PTHR34218:SF4">
    <property type="entry name" value="ACYL-HOMOSERINE LACTONE ACYLASE QUIP"/>
    <property type="match status" value="1"/>
</dbReference>
<dbReference type="PANTHER" id="PTHR34218">
    <property type="entry name" value="PEPTIDASE S45 PENICILLIN AMIDASE"/>
    <property type="match status" value="1"/>
</dbReference>
<dbReference type="Pfam" id="PF01804">
    <property type="entry name" value="Penicil_amidase"/>
    <property type="match status" value="1"/>
</dbReference>
<dbReference type="PIRSF" id="PIRSF001227">
    <property type="entry name" value="Pen_acylase"/>
    <property type="match status" value="1"/>
</dbReference>
<dbReference type="SUPFAM" id="SSF56235">
    <property type="entry name" value="N-terminal nucleophile aminohydrolases (Ntn hydrolases)"/>
    <property type="match status" value="1"/>
</dbReference>
<feature type="signal peptide" evidence="2">
    <location>
        <begin position="1"/>
        <end position="26"/>
    </location>
</feature>
<feature type="chain" id="PRO_0000253393" description="Acyl-homoserine lactone acylase QuiP">
    <location>
        <begin position="27"/>
        <end position="813"/>
    </location>
</feature>
<feature type="chain" id="PRO_0000253394" description="Acyl-homoserine lactone acylase QuiP subunit alpha">
    <location>
        <begin position="27"/>
        <end status="unknown"/>
    </location>
</feature>
<feature type="propeptide" id="PRO_0000253395" description="Spacer peptide" evidence="1">
    <location>
        <begin status="unknown"/>
        <end position="261"/>
    </location>
</feature>
<feature type="chain" id="PRO_0000253396" description="Acyl-homoserine lactone acylase QuiP subunit beta">
    <location>
        <begin position="262"/>
        <end position="813"/>
    </location>
</feature>
<feature type="active site" description="Nucleophile" evidence="1">
    <location>
        <position position="262"/>
    </location>
</feature>
<proteinExistence type="inferred from homology"/>